<sequence length="382" mass="41466">MLTRLFSEPGLLSDVPKFASWGDGDDDEPRSDKGDAPPQPPPAPGSGAPGPARATKPVSLRGEEVPEPTLAEVKEEGELGGEEEEEEEEEEGLDEAEGERPKKRGPKKRKMTKARLERSKLRRQKANARERNRMHDLNAALDNLRKVVPCYSKTQKLSKIETLRLAKNYIWALSEILRSGKRPDLVSYVQTLCKGLSQPTTNLVAGCLQLNSRNFLTEQGADGAGRFHGSGGPFAMHPYPYPCSRLAGDQCQAAGGLGGGAAHALRTHGYCAAYETLYAAAGGGGASPDYNSSEYEGPLSPPLCLNGNFSLKQDSSPDHEKSYHYSMHYSALPGSRPAGHGLVFGSSAVRGGVHSENLLSYDMHLHHDRGPMYEELNAFFHN</sequence>
<organism>
    <name type="scientific">Rattus norvegicus</name>
    <name type="common">Rat</name>
    <dbReference type="NCBI Taxonomy" id="10116"/>
    <lineage>
        <taxon>Eukaryota</taxon>
        <taxon>Metazoa</taxon>
        <taxon>Chordata</taxon>
        <taxon>Craniata</taxon>
        <taxon>Vertebrata</taxon>
        <taxon>Euteleostomi</taxon>
        <taxon>Mammalia</taxon>
        <taxon>Eutheria</taxon>
        <taxon>Euarchontoglires</taxon>
        <taxon>Glires</taxon>
        <taxon>Rodentia</taxon>
        <taxon>Myomorpha</taxon>
        <taxon>Muroidea</taxon>
        <taxon>Muridae</taxon>
        <taxon>Murinae</taxon>
        <taxon>Rattus</taxon>
    </lineage>
</organism>
<reference key="1">
    <citation type="journal article" date="1996" name="Biochem. Biophys. Res. Commun.">
        <title>Molecular cloning of a novel basic helix-loop-helix protein from the rat brain.</title>
        <authorList>
            <person name="Kume H."/>
            <person name="Maruyama K."/>
            <person name="Tomita T."/>
            <person name="Iwatsubo T."/>
            <person name="Saido T.C."/>
            <person name="Obata K."/>
        </authorList>
    </citation>
    <scope>NUCLEOTIDE SEQUENCE [MRNA]</scope>
    <source>
        <strain>Wistar</strain>
        <tissue>Brain</tissue>
    </source>
</reference>
<reference key="2">
    <citation type="journal article" date="2010" name="Mol. Cell. Neurosci.">
        <title>Transcriptional inhibition of REST by NeuroD2 during neuronal differentiation.</title>
        <authorList>
            <person name="Ravanpay A.C."/>
            <person name="Hansen S.J."/>
            <person name="Olson J.M."/>
        </authorList>
    </citation>
    <scope>TISSUE SPECIFICITY</scope>
</reference>
<protein>
    <recommendedName>
        <fullName>Neurogenic differentiation factor 2</fullName>
        <shortName>NeuroD2</shortName>
    </recommendedName>
    <alternativeName>
        <fullName>Brain bHLH protein KW8</fullName>
    </alternativeName>
</protein>
<dbReference type="EMBL" id="D82868">
    <property type="protein sequence ID" value="BAA11615.1"/>
    <property type="status" value="ALT_FRAME"/>
    <property type="molecule type" value="mRNA"/>
</dbReference>
<dbReference type="PIR" id="JC4647">
    <property type="entry name" value="JC4647"/>
</dbReference>
<dbReference type="RefSeq" id="NP_062199.1">
    <property type="nucleotide sequence ID" value="NM_019326.1"/>
</dbReference>
<dbReference type="SMR" id="Q63689"/>
<dbReference type="FunCoup" id="Q63689">
    <property type="interactions" value="30"/>
</dbReference>
<dbReference type="PhosphoSitePlus" id="Q63689"/>
<dbReference type="GeneID" id="54276"/>
<dbReference type="KEGG" id="rno:54276"/>
<dbReference type="UCSC" id="RGD:3166">
    <property type="organism name" value="rat"/>
</dbReference>
<dbReference type="AGR" id="RGD:3166"/>
<dbReference type="CTD" id="4761"/>
<dbReference type="RGD" id="3166">
    <property type="gene designation" value="Neurod2"/>
</dbReference>
<dbReference type="InParanoid" id="Q63689"/>
<dbReference type="PhylomeDB" id="Q63689"/>
<dbReference type="PRO" id="PR:Q63689"/>
<dbReference type="Proteomes" id="UP000002494">
    <property type="component" value="Unplaced"/>
</dbReference>
<dbReference type="GO" id="GO:0005634">
    <property type="term" value="C:nucleus"/>
    <property type="evidence" value="ECO:0000250"/>
    <property type="project" value="UniProtKB"/>
</dbReference>
<dbReference type="GO" id="GO:0003677">
    <property type="term" value="F:DNA binding"/>
    <property type="evidence" value="ECO:0000266"/>
    <property type="project" value="RGD"/>
</dbReference>
<dbReference type="GO" id="GO:0001228">
    <property type="term" value="F:DNA-binding transcription activator activity, RNA polymerase II-specific"/>
    <property type="evidence" value="ECO:0000266"/>
    <property type="project" value="RGD"/>
</dbReference>
<dbReference type="GO" id="GO:0003700">
    <property type="term" value="F:DNA-binding transcription factor activity"/>
    <property type="evidence" value="ECO:0000250"/>
    <property type="project" value="UniProtKB"/>
</dbReference>
<dbReference type="GO" id="GO:0000981">
    <property type="term" value="F:DNA-binding transcription factor activity, RNA polymerase II-specific"/>
    <property type="evidence" value="ECO:0000318"/>
    <property type="project" value="GO_Central"/>
</dbReference>
<dbReference type="GO" id="GO:0070888">
    <property type="term" value="F:E-box binding"/>
    <property type="evidence" value="ECO:0000250"/>
    <property type="project" value="UniProtKB"/>
</dbReference>
<dbReference type="GO" id="GO:0046982">
    <property type="term" value="F:protein heterodimerization activity"/>
    <property type="evidence" value="ECO:0000250"/>
    <property type="project" value="UniProtKB"/>
</dbReference>
<dbReference type="GO" id="GO:0000977">
    <property type="term" value="F:RNA polymerase II transcription regulatory region sequence-specific DNA binding"/>
    <property type="evidence" value="ECO:0000266"/>
    <property type="project" value="RGD"/>
</dbReference>
<dbReference type="GO" id="GO:1990837">
    <property type="term" value="F:sequence-specific double-stranded DNA binding"/>
    <property type="evidence" value="ECO:0000266"/>
    <property type="project" value="RGD"/>
</dbReference>
<dbReference type="GO" id="GO:0008306">
    <property type="term" value="P:associative learning"/>
    <property type="evidence" value="ECO:0000266"/>
    <property type="project" value="RGD"/>
</dbReference>
<dbReference type="GO" id="GO:0061564">
    <property type="term" value="P:axon development"/>
    <property type="evidence" value="ECO:0000318"/>
    <property type="project" value="GO_Central"/>
</dbReference>
<dbReference type="GO" id="GO:0001662">
    <property type="term" value="P:behavioral fear response"/>
    <property type="evidence" value="ECO:0000266"/>
    <property type="project" value="RGD"/>
</dbReference>
<dbReference type="GO" id="GO:0071277">
    <property type="term" value="P:cellular response to calcium ion"/>
    <property type="evidence" value="ECO:0000250"/>
    <property type="project" value="UniProtKB"/>
</dbReference>
<dbReference type="GO" id="GO:0071257">
    <property type="term" value="P:cellular response to electrical stimulus"/>
    <property type="evidence" value="ECO:0000250"/>
    <property type="project" value="UniProtKB"/>
</dbReference>
<dbReference type="GO" id="GO:0021695">
    <property type="term" value="P:cerebellar cortex development"/>
    <property type="evidence" value="ECO:0000250"/>
    <property type="project" value="UniProtKB"/>
</dbReference>
<dbReference type="GO" id="GO:2000297">
    <property type="term" value="P:negative regulation of synapse maturation"/>
    <property type="evidence" value="ECO:0000250"/>
    <property type="project" value="UniProtKB"/>
</dbReference>
<dbReference type="GO" id="GO:0048666">
    <property type="term" value="P:neuron development"/>
    <property type="evidence" value="ECO:0000266"/>
    <property type="project" value="RGD"/>
</dbReference>
<dbReference type="GO" id="GO:0050850">
    <property type="term" value="P:positive regulation of calcium-mediated signaling"/>
    <property type="evidence" value="ECO:0000250"/>
    <property type="project" value="UniProtKB"/>
</dbReference>
<dbReference type="GO" id="GO:0051091">
    <property type="term" value="P:positive regulation of DNA-binding transcription factor activity"/>
    <property type="evidence" value="ECO:0000250"/>
    <property type="project" value="UniProtKB"/>
</dbReference>
<dbReference type="GO" id="GO:0045666">
    <property type="term" value="P:positive regulation of neuron differentiation"/>
    <property type="evidence" value="ECO:0000250"/>
    <property type="project" value="UniProtKB"/>
</dbReference>
<dbReference type="GO" id="GO:0090129">
    <property type="term" value="P:positive regulation of synapse maturation"/>
    <property type="evidence" value="ECO:0000250"/>
    <property type="project" value="UniProtKB"/>
</dbReference>
<dbReference type="GO" id="GO:0031915">
    <property type="term" value="P:positive regulation of synaptic plasticity"/>
    <property type="evidence" value="ECO:0000250"/>
    <property type="project" value="UniProtKB"/>
</dbReference>
<dbReference type="GO" id="GO:0045944">
    <property type="term" value="P:positive regulation of transcription by RNA polymerase II"/>
    <property type="evidence" value="ECO:0000266"/>
    <property type="project" value="RGD"/>
</dbReference>
<dbReference type="GO" id="GO:0016567">
    <property type="term" value="P:protein ubiquitination"/>
    <property type="evidence" value="ECO:0000250"/>
    <property type="project" value="UniProtKB"/>
</dbReference>
<dbReference type="GO" id="GO:0007423">
    <property type="term" value="P:sensory organ development"/>
    <property type="evidence" value="ECO:0000318"/>
    <property type="project" value="GO_Central"/>
</dbReference>
<dbReference type="CDD" id="cd19720">
    <property type="entry name" value="bHLH_TS_NeuroD2"/>
    <property type="match status" value="1"/>
</dbReference>
<dbReference type="FunFam" id="4.10.280.10:FF:000006">
    <property type="entry name" value="Neurogenic differentiation factor"/>
    <property type="match status" value="1"/>
</dbReference>
<dbReference type="Gene3D" id="4.10.280.10">
    <property type="entry name" value="Helix-loop-helix DNA-binding domain"/>
    <property type="match status" value="1"/>
</dbReference>
<dbReference type="InterPro" id="IPR011598">
    <property type="entry name" value="bHLH_dom"/>
</dbReference>
<dbReference type="InterPro" id="IPR050359">
    <property type="entry name" value="bHLH_transcription_factors"/>
</dbReference>
<dbReference type="InterPro" id="IPR036638">
    <property type="entry name" value="HLH_DNA-bd_sf"/>
</dbReference>
<dbReference type="InterPro" id="IPR022575">
    <property type="entry name" value="NeuroD_DUF"/>
</dbReference>
<dbReference type="InterPro" id="IPR016637">
    <property type="entry name" value="TF_bHLH_NeuroD"/>
</dbReference>
<dbReference type="PANTHER" id="PTHR19290">
    <property type="entry name" value="BASIC HELIX-LOOP-HELIX PROTEIN NEUROGENIN-RELATED"/>
    <property type="match status" value="1"/>
</dbReference>
<dbReference type="PANTHER" id="PTHR19290:SF83">
    <property type="entry name" value="NEUROGENIC DIFFERENTIATION FACTOR 2"/>
    <property type="match status" value="1"/>
</dbReference>
<dbReference type="Pfam" id="PF00010">
    <property type="entry name" value="HLH"/>
    <property type="match status" value="1"/>
</dbReference>
<dbReference type="Pfam" id="PF12533">
    <property type="entry name" value="Neuro_bHLH"/>
    <property type="match status" value="1"/>
</dbReference>
<dbReference type="PIRSF" id="PIRSF015618">
    <property type="entry name" value="bHLH_NeuroD"/>
    <property type="match status" value="1"/>
</dbReference>
<dbReference type="SMART" id="SM00353">
    <property type="entry name" value="HLH"/>
    <property type="match status" value="1"/>
</dbReference>
<dbReference type="SUPFAM" id="SSF47459">
    <property type="entry name" value="HLH, helix-loop-helix DNA-binding domain"/>
    <property type="match status" value="1"/>
</dbReference>
<dbReference type="PROSITE" id="PS50888">
    <property type="entry name" value="BHLH"/>
    <property type="match status" value="1"/>
</dbReference>
<gene>
    <name type="primary">Neurod2</name>
</gene>
<name>NDF2_RAT</name>
<keyword id="KW-0010">Activator</keyword>
<keyword id="KW-0217">Developmental protein</keyword>
<keyword id="KW-0221">Differentiation</keyword>
<keyword id="KW-0238">DNA-binding</keyword>
<keyword id="KW-0524">Neurogenesis</keyword>
<keyword id="KW-0539">Nucleus</keyword>
<keyword id="KW-1185">Reference proteome</keyword>
<keyword id="KW-0804">Transcription</keyword>
<keyword id="KW-0805">Transcription regulation</keyword>
<proteinExistence type="evidence at protein level"/>
<feature type="chain" id="PRO_0000127389" description="Neurogenic differentiation factor 2">
    <location>
        <begin position="1"/>
        <end position="382"/>
    </location>
</feature>
<feature type="domain" description="bHLH" evidence="3">
    <location>
        <begin position="121"/>
        <end position="173"/>
    </location>
</feature>
<feature type="region of interest" description="Disordered" evidence="4">
    <location>
        <begin position="1"/>
        <end position="129"/>
    </location>
</feature>
<feature type="short sequence motif" description="Nuclear localization signal" evidence="2">
    <location>
        <begin position="107"/>
        <end position="113"/>
    </location>
</feature>
<feature type="compositionally biased region" description="Acidic residues" evidence="4">
    <location>
        <begin position="78"/>
        <end position="97"/>
    </location>
</feature>
<feature type="compositionally biased region" description="Basic residues" evidence="4">
    <location>
        <begin position="101"/>
        <end position="113"/>
    </location>
</feature>
<comment type="function">
    <text evidence="1">Transcriptional regulator implicated in neuronal determination. Mediates calcium-dependent transcription activation by binding to E box-containing promoter. Critical factor essential for the repression of the genetic program for neuronal differentiation; prevents the formation of synaptic vesicle clustering at active zone to the presynaptic membrane in postmitotic neurons. Induces transcription of ZEB1, which in turn represses neuronal differentiation by down-regulating REST expression. Plays a role in the establishment and maturation of thalamocortical connections; involved in the segregation of thalamic afferents into distinct barrel domains within layer VI of the somatosensory cortex. Involved in the development of the cerebellar and hippocampal granular neurons, neurons in the basolateral nucleus of amygdala and the hypothalamic-pituitary axis. Associates with chromatin to the DPYSL3 E box-containing promoter (By similarity).</text>
</comment>
<comment type="subunit">
    <text evidence="1">Interacts with TCF3, TCF4 and TCF12. Interacts with CDC20. Efficient DNA-binding and transcription activation require dimerization with another bHLH protein (By similarity).</text>
</comment>
<comment type="subcellular location">
    <subcellularLocation>
        <location evidence="3">Nucleus</location>
    </subcellularLocation>
</comment>
<comment type="tissue specificity">
    <text evidence="5">Detected only in neural tissue. Expressed in the developing cerebellum and in primary granules neurons (at protein level).</text>
</comment>
<comment type="domain">
    <text evidence="1">The C-terminal region is necessary for depolarization-induced and calcium-dependent transcription activation.</text>
</comment>
<comment type="sequence caution" evidence="6">
    <conflict type="frameshift">
        <sequence resource="EMBL-CDS" id="BAA11615"/>
    </conflict>
</comment>
<accession>Q63689</accession>
<evidence type="ECO:0000250" key="1"/>
<evidence type="ECO:0000255" key="2"/>
<evidence type="ECO:0000255" key="3">
    <source>
        <dbReference type="PROSITE-ProRule" id="PRU00981"/>
    </source>
</evidence>
<evidence type="ECO:0000256" key="4">
    <source>
        <dbReference type="SAM" id="MobiDB-lite"/>
    </source>
</evidence>
<evidence type="ECO:0000269" key="5">
    <source>
    </source>
</evidence>
<evidence type="ECO:0000305" key="6"/>